<dbReference type="EMBL" id="D26185">
    <property type="protein sequence ID" value="BAA05293.1"/>
    <property type="molecule type" value="Genomic_DNA"/>
</dbReference>
<dbReference type="EMBL" id="AL009126">
    <property type="protein sequence ID" value="CAB11834.1"/>
    <property type="molecule type" value="Genomic_DNA"/>
</dbReference>
<dbReference type="PIR" id="S66088">
    <property type="entry name" value="S66088"/>
</dbReference>
<dbReference type="RefSeq" id="NP_387939.1">
    <property type="nucleotide sequence ID" value="NC_000964.3"/>
</dbReference>
<dbReference type="SMR" id="P37556"/>
<dbReference type="FunCoup" id="P37556">
    <property type="interactions" value="151"/>
</dbReference>
<dbReference type="STRING" id="224308.BSU00580"/>
<dbReference type="PaxDb" id="224308-BSU00580"/>
<dbReference type="DNASU" id="936973"/>
<dbReference type="EnsemblBacteria" id="CAB11834">
    <property type="protein sequence ID" value="CAB11834"/>
    <property type="gene ID" value="BSU_00580"/>
</dbReference>
<dbReference type="GeneID" id="936973"/>
<dbReference type="KEGG" id="bsu:BSU00580"/>
<dbReference type="PATRIC" id="fig|224308.179.peg.58"/>
<dbReference type="eggNOG" id="COG3956">
    <property type="taxonomic scope" value="Bacteria"/>
</dbReference>
<dbReference type="InParanoid" id="P37556"/>
<dbReference type="OrthoDB" id="9808939at2"/>
<dbReference type="PhylomeDB" id="P37556"/>
<dbReference type="BioCyc" id="BSUB:BSU00580-MONOMER"/>
<dbReference type="Proteomes" id="UP000001570">
    <property type="component" value="Chromosome"/>
</dbReference>
<dbReference type="GO" id="GO:0008168">
    <property type="term" value="F:methyltransferase activity"/>
    <property type="evidence" value="ECO:0007669"/>
    <property type="project" value="InterPro"/>
</dbReference>
<dbReference type="GO" id="GO:0047429">
    <property type="term" value="F:nucleoside triphosphate diphosphatase activity"/>
    <property type="evidence" value="ECO:0000318"/>
    <property type="project" value="GO_Central"/>
</dbReference>
<dbReference type="GO" id="GO:0046061">
    <property type="term" value="P:dATP catabolic process"/>
    <property type="evidence" value="ECO:0000318"/>
    <property type="project" value="GO_Central"/>
</dbReference>
<dbReference type="GO" id="GO:0006203">
    <property type="term" value="P:dGTP catabolic process"/>
    <property type="evidence" value="ECO:0000318"/>
    <property type="project" value="GO_Central"/>
</dbReference>
<dbReference type="GO" id="GO:0046076">
    <property type="term" value="P:dTTP catabolic process"/>
    <property type="evidence" value="ECO:0000318"/>
    <property type="project" value="GO_Central"/>
</dbReference>
<dbReference type="GO" id="GO:0046081">
    <property type="term" value="P:dUTP catabolic process"/>
    <property type="evidence" value="ECO:0000318"/>
    <property type="project" value="GO_Central"/>
</dbReference>
<dbReference type="GO" id="GO:0046047">
    <property type="term" value="P:TTP catabolic process"/>
    <property type="evidence" value="ECO:0000318"/>
    <property type="project" value="GO_Central"/>
</dbReference>
<dbReference type="GO" id="GO:0046052">
    <property type="term" value="P:UTP catabolic process"/>
    <property type="evidence" value="ECO:0000318"/>
    <property type="project" value="GO_Central"/>
</dbReference>
<dbReference type="CDD" id="cd11529">
    <property type="entry name" value="NTP-PPase_MazG_Cterm"/>
    <property type="match status" value="1"/>
</dbReference>
<dbReference type="CDD" id="cd11528">
    <property type="entry name" value="NTP-PPase_MazG_Nterm"/>
    <property type="match status" value="1"/>
</dbReference>
<dbReference type="CDD" id="cd11723">
    <property type="entry name" value="YabN_N_like"/>
    <property type="match status" value="1"/>
</dbReference>
<dbReference type="FunFam" id="1.10.287.1080:FF:000001">
    <property type="entry name" value="Nucleoside triphosphate pyrophosphohydrolase"/>
    <property type="match status" value="1"/>
</dbReference>
<dbReference type="FunFam" id="1.10.287.1080:FF:000003">
    <property type="entry name" value="Nucleoside triphosphate pyrophosphohydrolase"/>
    <property type="match status" value="1"/>
</dbReference>
<dbReference type="FunFam" id="3.40.1010.10:FF:000008">
    <property type="entry name" value="Similar to nucleoside triphosphate pyrophosphohydrolase, MazG"/>
    <property type="match status" value="1"/>
</dbReference>
<dbReference type="Gene3D" id="3.40.1010.10">
    <property type="entry name" value="Cobalt-precorrin-4 Transmethylase, Domain 1"/>
    <property type="match status" value="1"/>
</dbReference>
<dbReference type="Gene3D" id="1.10.287.1080">
    <property type="entry name" value="MazG-like"/>
    <property type="match status" value="2"/>
</dbReference>
<dbReference type="InterPro" id="IPR000878">
    <property type="entry name" value="4pyrrol_Mease"/>
</dbReference>
<dbReference type="InterPro" id="IPR035996">
    <property type="entry name" value="4pyrrol_Methylase_sf"/>
</dbReference>
<dbReference type="InterPro" id="IPR014777">
    <property type="entry name" value="4pyrrole_Mease_sub1"/>
</dbReference>
<dbReference type="InterPro" id="IPR004518">
    <property type="entry name" value="MazG-like_dom"/>
</dbReference>
<dbReference type="InterPro" id="IPR048011">
    <property type="entry name" value="NTP-PPase_MazG-like_C"/>
</dbReference>
<dbReference type="InterPro" id="IPR048015">
    <property type="entry name" value="NTP-PPase_MazG-like_N"/>
</dbReference>
<dbReference type="InterPro" id="IPR011551">
    <property type="entry name" value="NTP_PyrPHydrolase_MazG"/>
</dbReference>
<dbReference type="InterPro" id="IPR024180">
    <property type="entry name" value="Tetrapyrrole_Mease/MazG_pred"/>
</dbReference>
<dbReference type="InterPro" id="IPR035013">
    <property type="entry name" value="YabN_N"/>
</dbReference>
<dbReference type="NCBIfam" id="TIGR00444">
    <property type="entry name" value="mazG"/>
    <property type="match status" value="1"/>
</dbReference>
<dbReference type="NCBIfam" id="NF007113">
    <property type="entry name" value="PRK09562.1"/>
    <property type="match status" value="1"/>
</dbReference>
<dbReference type="PANTHER" id="PTHR30522">
    <property type="entry name" value="NUCLEOSIDE TRIPHOSPHATE PYROPHOSPHOHYDROLASE"/>
    <property type="match status" value="1"/>
</dbReference>
<dbReference type="PANTHER" id="PTHR30522:SF0">
    <property type="entry name" value="NUCLEOSIDE TRIPHOSPHATE PYROPHOSPHOHYDROLASE"/>
    <property type="match status" value="1"/>
</dbReference>
<dbReference type="Pfam" id="PF03819">
    <property type="entry name" value="MazG"/>
    <property type="match status" value="2"/>
</dbReference>
<dbReference type="Pfam" id="PF00590">
    <property type="entry name" value="TP_methylase"/>
    <property type="match status" value="1"/>
</dbReference>
<dbReference type="PIRSF" id="PIRSF002845">
    <property type="entry name" value="Ttrprl_mtas_MazG"/>
    <property type="match status" value="1"/>
</dbReference>
<dbReference type="SUPFAM" id="SSF101386">
    <property type="entry name" value="all-alpha NTP pyrophosphatases"/>
    <property type="match status" value="2"/>
</dbReference>
<dbReference type="SUPFAM" id="SSF53790">
    <property type="entry name" value="Tetrapyrrole methylase"/>
    <property type="match status" value="1"/>
</dbReference>
<reference key="1">
    <citation type="journal article" date="1994" name="DNA Res.">
        <title>Systematic sequencing of the 180 kilobase region of the Bacillus subtilis chromosome containing the replication origin.</title>
        <authorList>
            <person name="Ogasawara N."/>
            <person name="Nakai S."/>
            <person name="Yoshikawa H."/>
        </authorList>
    </citation>
    <scope>NUCLEOTIDE SEQUENCE [GENOMIC DNA]</scope>
    <source>
        <strain>168</strain>
    </source>
</reference>
<reference key="2">
    <citation type="journal article" date="1997" name="Nature">
        <title>The complete genome sequence of the Gram-positive bacterium Bacillus subtilis.</title>
        <authorList>
            <person name="Kunst F."/>
            <person name="Ogasawara N."/>
            <person name="Moszer I."/>
            <person name="Albertini A.M."/>
            <person name="Alloni G."/>
            <person name="Azevedo V."/>
            <person name="Bertero M.G."/>
            <person name="Bessieres P."/>
            <person name="Bolotin A."/>
            <person name="Borchert S."/>
            <person name="Borriss R."/>
            <person name="Boursier L."/>
            <person name="Brans A."/>
            <person name="Braun M."/>
            <person name="Brignell S.C."/>
            <person name="Bron S."/>
            <person name="Brouillet S."/>
            <person name="Bruschi C.V."/>
            <person name="Caldwell B."/>
            <person name="Capuano V."/>
            <person name="Carter N.M."/>
            <person name="Choi S.-K."/>
            <person name="Codani J.-J."/>
            <person name="Connerton I.F."/>
            <person name="Cummings N.J."/>
            <person name="Daniel R.A."/>
            <person name="Denizot F."/>
            <person name="Devine K.M."/>
            <person name="Duesterhoeft A."/>
            <person name="Ehrlich S.D."/>
            <person name="Emmerson P.T."/>
            <person name="Entian K.-D."/>
            <person name="Errington J."/>
            <person name="Fabret C."/>
            <person name="Ferrari E."/>
            <person name="Foulger D."/>
            <person name="Fritz C."/>
            <person name="Fujita M."/>
            <person name="Fujita Y."/>
            <person name="Fuma S."/>
            <person name="Galizzi A."/>
            <person name="Galleron N."/>
            <person name="Ghim S.-Y."/>
            <person name="Glaser P."/>
            <person name="Goffeau A."/>
            <person name="Golightly E.J."/>
            <person name="Grandi G."/>
            <person name="Guiseppi G."/>
            <person name="Guy B.J."/>
            <person name="Haga K."/>
            <person name="Haiech J."/>
            <person name="Harwood C.R."/>
            <person name="Henaut A."/>
            <person name="Hilbert H."/>
            <person name="Holsappel S."/>
            <person name="Hosono S."/>
            <person name="Hullo M.-F."/>
            <person name="Itaya M."/>
            <person name="Jones L.-M."/>
            <person name="Joris B."/>
            <person name="Karamata D."/>
            <person name="Kasahara Y."/>
            <person name="Klaerr-Blanchard M."/>
            <person name="Klein C."/>
            <person name="Kobayashi Y."/>
            <person name="Koetter P."/>
            <person name="Koningstein G."/>
            <person name="Krogh S."/>
            <person name="Kumano M."/>
            <person name="Kurita K."/>
            <person name="Lapidus A."/>
            <person name="Lardinois S."/>
            <person name="Lauber J."/>
            <person name="Lazarevic V."/>
            <person name="Lee S.-M."/>
            <person name="Levine A."/>
            <person name="Liu H."/>
            <person name="Masuda S."/>
            <person name="Mauel C."/>
            <person name="Medigue C."/>
            <person name="Medina N."/>
            <person name="Mellado R.P."/>
            <person name="Mizuno M."/>
            <person name="Moestl D."/>
            <person name="Nakai S."/>
            <person name="Noback M."/>
            <person name="Noone D."/>
            <person name="O'Reilly M."/>
            <person name="Ogawa K."/>
            <person name="Ogiwara A."/>
            <person name="Oudega B."/>
            <person name="Park S.-H."/>
            <person name="Parro V."/>
            <person name="Pohl T.M."/>
            <person name="Portetelle D."/>
            <person name="Porwollik S."/>
            <person name="Prescott A.M."/>
            <person name="Presecan E."/>
            <person name="Pujic P."/>
            <person name="Purnelle B."/>
            <person name="Rapoport G."/>
            <person name="Rey M."/>
            <person name="Reynolds S."/>
            <person name="Rieger M."/>
            <person name="Rivolta C."/>
            <person name="Rocha E."/>
            <person name="Roche B."/>
            <person name="Rose M."/>
            <person name="Sadaie Y."/>
            <person name="Sato T."/>
            <person name="Scanlan E."/>
            <person name="Schleich S."/>
            <person name="Schroeter R."/>
            <person name="Scoffone F."/>
            <person name="Sekiguchi J."/>
            <person name="Sekowska A."/>
            <person name="Seror S.J."/>
            <person name="Serror P."/>
            <person name="Shin B.-S."/>
            <person name="Soldo B."/>
            <person name="Sorokin A."/>
            <person name="Tacconi E."/>
            <person name="Takagi T."/>
            <person name="Takahashi H."/>
            <person name="Takemaru K."/>
            <person name="Takeuchi M."/>
            <person name="Tamakoshi A."/>
            <person name="Tanaka T."/>
            <person name="Terpstra P."/>
            <person name="Tognoni A."/>
            <person name="Tosato V."/>
            <person name="Uchiyama S."/>
            <person name="Vandenbol M."/>
            <person name="Vannier F."/>
            <person name="Vassarotti A."/>
            <person name="Viari A."/>
            <person name="Wambutt R."/>
            <person name="Wedler E."/>
            <person name="Wedler H."/>
            <person name="Weitzenegger T."/>
            <person name="Winters P."/>
            <person name="Wipat A."/>
            <person name="Yamamoto H."/>
            <person name="Yamane K."/>
            <person name="Yasumoto K."/>
            <person name="Yata K."/>
            <person name="Yoshida K."/>
            <person name="Yoshikawa H.-F."/>
            <person name="Zumstein E."/>
            <person name="Yoshikawa H."/>
            <person name="Danchin A."/>
        </authorList>
    </citation>
    <scope>NUCLEOTIDE SEQUENCE [LARGE SCALE GENOMIC DNA]</scope>
    <source>
        <strain>168</strain>
    </source>
</reference>
<organism>
    <name type="scientific">Bacillus subtilis (strain 168)</name>
    <dbReference type="NCBI Taxonomy" id="224308"/>
    <lineage>
        <taxon>Bacteria</taxon>
        <taxon>Bacillati</taxon>
        <taxon>Bacillota</taxon>
        <taxon>Bacilli</taxon>
        <taxon>Bacillales</taxon>
        <taxon>Bacillaceae</taxon>
        <taxon>Bacillus</taxon>
    </lineage>
</organism>
<accession>P37556</accession>
<proteinExistence type="predicted"/>
<feature type="chain" id="PRO_0000049443" description="Uncharacterized protein YabN">
    <location>
        <begin position="1"/>
        <end position="489"/>
    </location>
</feature>
<gene>
    <name type="primary">yabN</name>
    <name type="ordered locus">BSU00580</name>
</gene>
<sequence length="489" mass="56106">MAGKITVVGLGAGDMDQLTIGIHKLLTKADTLYVRTKDHPLIEELEKETKNIRFFDDIYEKHDQFEAVYEEIADILFEAARREDVVYAVPGHPFVAEKTVQLLTERQEKENVQVKVAGGQSFLDATFNVLQIDPIEGFQFVDAGTLSADELELRHHLIICQVYDQMTASEVKLTLMEKLPDDYEVVIVTAAGSRGEEIRTVPLFELDRNVALNNLTSVYIPPIKEEKLLYHEFSTFRSIIRELRGPNGCPWDKKQTHQSLKQYMIEECYELLEAIDEEDTDHMIEELGDVLLQVLLHAQIGEDEGYFTIDDVIKGISEKMVRRHPHVFKDVKVQDENDVLANWEDIKKAEKNTSESSLLDSVPKTLPALSKAAKLQKKAAKVGFDWEDVSDIWEKVSEEMKEFSSEVSEAPHEHNLKAEFGDILFALVNVARFYKIEPEEALTMTNDKFRRRFSYIEETAKEEGVELADMSLEDMDKLWNEAKETERRS</sequence>
<name>YABN_BACSU</name>
<protein>
    <recommendedName>
        <fullName>Uncharacterized protein YabN</fullName>
    </recommendedName>
</protein>
<keyword id="KW-1185">Reference proteome</keyword>